<protein>
    <recommendedName>
        <fullName>Aromatic-L-amino-acid decarboxylase</fullName>
        <shortName>AADC</shortName>
        <ecNumber evidence="1">4.1.1.28</ecNumber>
    </recommendedName>
    <alternativeName>
        <fullName evidence="1">DOPA decarboxylase</fullName>
        <shortName>DDC</shortName>
    </alternativeName>
</protein>
<keyword id="KW-0025">Alternative splicing</keyword>
<keyword id="KW-0127">Catecholamine biosynthesis</keyword>
<keyword id="KW-0210">Decarboxylase</keyword>
<keyword id="KW-0456">Lyase</keyword>
<keyword id="KW-0663">Pyridoxal phosphate</keyword>
<organism>
    <name type="scientific">Drosophila simulans</name>
    <name type="common">Fruit fly</name>
    <dbReference type="NCBI Taxonomy" id="7240"/>
    <lineage>
        <taxon>Eukaryota</taxon>
        <taxon>Metazoa</taxon>
        <taxon>Ecdysozoa</taxon>
        <taxon>Arthropoda</taxon>
        <taxon>Hexapoda</taxon>
        <taxon>Insecta</taxon>
        <taxon>Pterygota</taxon>
        <taxon>Neoptera</taxon>
        <taxon>Endopterygota</taxon>
        <taxon>Diptera</taxon>
        <taxon>Brachycera</taxon>
        <taxon>Muscomorpha</taxon>
        <taxon>Ephydroidea</taxon>
        <taxon>Drosophilidae</taxon>
        <taxon>Drosophila</taxon>
        <taxon>Sophophora</taxon>
    </lineage>
</organism>
<reference key="1">
    <citation type="journal article" date="2003" name="Nat. Genet.">
        <title>Dopa decarboxylase (Ddc) affects variation in Drosophila longevity.</title>
        <authorList>
            <person name="De Luca M."/>
            <person name="Roshina N.V."/>
            <person name="Geiger-Thornsberry G.L."/>
            <person name="Lyman R.F."/>
            <person name="Pasyukova E.G."/>
            <person name="Mackay T.F.C."/>
        </authorList>
    </citation>
    <scope>NUCLEOTIDE SEQUENCE [GENOMIC DNA] (ISOFORMS 1 AND 2)</scope>
    <scope>FUNCTION</scope>
    <source>
        <tissue>Brain</tissue>
        <tissue>Epidermis</tissue>
    </source>
</reference>
<reference key="2">
    <citation type="journal article" date="1999" name="Gene">
        <title>A compact gene cluster in Drosophila: the unrelated Cs gene is compressed between duplicated amd and Ddc.</title>
        <authorList>
            <person name="Tatarenkov A."/>
            <person name="Saez A.G."/>
            <person name="Ayala F.J."/>
        </authorList>
    </citation>
    <scope>NUCLEOTIDE SEQUENCE [GENOMIC DNA] OF 74-510</scope>
    <source>
        <strain>St. Lucia</strain>
    </source>
</reference>
<sequence>MSHIPISNTIPPKQTDGNGKANISPDKLDPKVSIDMEAPEFKDFAKTMVDFIAEYLENIRDRRVLPEVKPGYLKPLIPDAAPEKPEKWQDVMQDIERVIMPGVTHWHSPKFHAYFPTANSYPAIVADMLSGAIACIGFTWIASPACTELEVVMMDWLGKMLELPAEFLVCSGGKGGGVIQGTASESTLVALLGAKAKKLKEVKELHPEWDEHTILGKLVGYCSDQAHSSVERAGLLGGVKLRSVQSENHRMRGAALEKAIEQDLAEGLIPFYAVVTLGTTNSCAFDYLDECGPVGNKHNLWIHVDAAYAGSAFICPEYRHLMKGIESADSFNFNPHKWMLVNFDCSAMWLKDPSWVVNAFNVDPLYLKHDMQGSAPDYRHWQIPLGRRFRALKLWFVLRLYGVENLQAHIRRHCNFAKQFGDLCVADSRFELAAEINMGLVCFRLKGSNERNEALLKRINGRGHIHLVPAKIKDVYFLRMAICSRFTQSEDMEYSWKEVSAAADEMEQEQ</sequence>
<dbReference type="EC" id="4.1.1.28" evidence="1"/>
<dbReference type="EMBL" id="AY197770">
    <property type="protein sequence ID" value="AAO16859.1"/>
    <property type="molecule type" value="Genomic_DNA"/>
</dbReference>
<dbReference type="EMBL" id="AY197770">
    <property type="protein sequence ID" value="AAO16860.1"/>
    <property type="molecule type" value="Genomic_DNA"/>
</dbReference>
<dbReference type="EMBL" id="AF091327">
    <property type="protein sequence ID" value="AAC67580.1"/>
    <property type="molecule type" value="Genomic_DNA"/>
</dbReference>
<dbReference type="SMR" id="O96567"/>
<dbReference type="OrthoDB" id="639767at2759"/>
<dbReference type="ChiTaRS" id="Ddc">
    <property type="organism name" value="fly"/>
</dbReference>
<dbReference type="GO" id="GO:0005737">
    <property type="term" value="C:cytoplasm"/>
    <property type="evidence" value="ECO:0007669"/>
    <property type="project" value="TreeGrafter"/>
</dbReference>
<dbReference type="GO" id="GO:0036467">
    <property type="term" value="F:5-hydroxy-L-tryptophan decarboxylase activity"/>
    <property type="evidence" value="ECO:0007669"/>
    <property type="project" value="EnsemblMetazoa"/>
</dbReference>
<dbReference type="GO" id="GO:0036468">
    <property type="term" value="F:L-dopa decarboxylase activity"/>
    <property type="evidence" value="ECO:0007669"/>
    <property type="project" value="EnsemblMetazoa"/>
</dbReference>
<dbReference type="GO" id="GO:0030170">
    <property type="term" value="F:pyridoxal phosphate binding"/>
    <property type="evidence" value="ECO:0007669"/>
    <property type="project" value="InterPro"/>
</dbReference>
<dbReference type="GO" id="GO:0048085">
    <property type="term" value="P:adult chitin-containing cuticle pigmentation"/>
    <property type="evidence" value="ECO:0007669"/>
    <property type="project" value="EnsemblMetazoa"/>
</dbReference>
<dbReference type="GO" id="GO:0007615">
    <property type="term" value="P:anesthesia-resistant memory"/>
    <property type="evidence" value="ECO:0007669"/>
    <property type="project" value="EnsemblMetazoa"/>
</dbReference>
<dbReference type="GO" id="GO:0006585">
    <property type="term" value="P:dopamine biosynthetic process from tyrosine"/>
    <property type="evidence" value="ECO:0007669"/>
    <property type="project" value="EnsemblMetazoa"/>
</dbReference>
<dbReference type="GO" id="GO:0007616">
    <property type="term" value="P:long-term memory"/>
    <property type="evidence" value="ECO:0007669"/>
    <property type="project" value="EnsemblMetazoa"/>
</dbReference>
<dbReference type="GO" id="GO:0048082">
    <property type="term" value="P:regulation of adult chitin-containing cuticle pigmentation"/>
    <property type="evidence" value="ECO:0007669"/>
    <property type="project" value="EnsemblMetazoa"/>
</dbReference>
<dbReference type="GO" id="GO:0042542">
    <property type="term" value="P:response to hydrogen peroxide"/>
    <property type="evidence" value="ECO:0007669"/>
    <property type="project" value="EnsemblMetazoa"/>
</dbReference>
<dbReference type="GO" id="GO:0009611">
    <property type="term" value="P:response to wounding"/>
    <property type="evidence" value="ECO:0007669"/>
    <property type="project" value="EnsemblMetazoa"/>
</dbReference>
<dbReference type="GO" id="GO:0006587">
    <property type="term" value="P:serotonin biosynthetic process from tryptophan"/>
    <property type="evidence" value="ECO:0007669"/>
    <property type="project" value="EnsemblMetazoa"/>
</dbReference>
<dbReference type="GO" id="GO:0040040">
    <property type="term" value="P:thermosensory behavior"/>
    <property type="evidence" value="ECO:0007669"/>
    <property type="project" value="EnsemblMetazoa"/>
</dbReference>
<dbReference type="GO" id="GO:0043052">
    <property type="term" value="P:thermotaxis"/>
    <property type="evidence" value="ECO:0007669"/>
    <property type="project" value="EnsemblMetazoa"/>
</dbReference>
<dbReference type="GO" id="GO:0035220">
    <property type="term" value="P:wing disc development"/>
    <property type="evidence" value="ECO:0007669"/>
    <property type="project" value="EnsemblMetazoa"/>
</dbReference>
<dbReference type="CDD" id="cd06450">
    <property type="entry name" value="DOPA_deC_like"/>
    <property type="match status" value="1"/>
</dbReference>
<dbReference type="FunFam" id="3.90.1150.10:FF:000119">
    <property type="entry name" value="Ddc, isoform C"/>
    <property type="match status" value="1"/>
</dbReference>
<dbReference type="FunFam" id="1.20.1340.10:FF:000001">
    <property type="entry name" value="Histidine decarboxylase"/>
    <property type="match status" value="1"/>
</dbReference>
<dbReference type="FunFam" id="3.40.640.10:FF:000025">
    <property type="entry name" value="Histidine decarboxylase"/>
    <property type="match status" value="1"/>
</dbReference>
<dbReference type="Gene3D" id="3.90.1150.10">
    <property type="entry name" value="Aspartate Aminotransferase, domain 1"/>
    <property type="match status" value="1"/>
</dbReference>
<dbReference type="Gene3D" id="1.20.1340.10">
    <property type="entry name" value="dopa decarboxylase, N-terminal domain"/>
    <property type="match status" value="1"/>
</dbReference>
<dbReference type="Gene3D" id="3.40.640.10">
    <property type="entry name" value="Type I PLP-dependent aspartate aminotransferase-like (Major domain)"/>
    <property type="match status" value="1"/>
</dbReference>
<dbReference type="InterPro" id="IPR010977">
    <property type="entry name" value="Aromatic_deC"/>
</dbReference>
<dbReference type="InterPro" id="IPR002129">
    <property type="entry name" value="PyrdxlP-dep_de-COase"/>
</dbReference>
<dbReference type="InterPro" id="IPR015424">
    <property type="entry name" value="PyrdxlP-dep_Trfase"/>
</dbReference>
<dbReference type="InterPro" id="IPR015421">
    <property type="entry name" value="PyrdxlP-dep_Trfase_major"/>
</dbReference>
<dbReference type="InterPro" id="IPR015422">
    <property type="entry name" value="PyrdxlP-dep_Trfase_small"/>
</dbReference>
<dbReference type="InterPro" id="IPR021115">
    <property type="entry name" value="Pyridoxal-P_BS"/>
</dbReference>
<dbReference type="PANTHER" id="PTHR11999:SF167">
    <property type="entry name" value="AROMATIC-L-AMINO-ACID DECARBOXYLASE"/>
    <property type="match status" value="1"/>
</dbReference>
<dbReference type="PANTHER" id="PTHR11999">
    <property type="entry name" value="GROUP II PYRIDOXAL-5-PHOSPHATE DECARBOXYLASE"/>
    <property type="match status" value="1"/>
</dbReference>
<dbReference type="Pfam" id="PF00282">
    <property type="entry name" value="Pyridoxal_deC"/>
    <property type="match status" value="1"/>
</dbReference>
<dbReference type="PRINTS" id="PR00800">
    <property type="entry name" value="YHDCRBOXLASE"/>
</dbReference>
<dbReference type="SUPFAM" id="SSF53383">
    <property type="entry name" value="PLP-dependent transferases"/>
    <property type="match status" value="1"/>
</dbReference>
<dbReference type="PROSITE" id="PS00392">
    <property type="entry name" value="DDC_GAD_HDC_YDC"/>
    <property type="match status" value="1"/>
</dbReference>
<gene>
    <name type="primary">Ddc</name>
</gene>
<accession>O96567</accession>
<accession>Q7Z0D9</accession>
<accession>Q7Z0E0</accession>
<evidence type="ECO:0000250" key="1">
    <source>
        <dbReference type="UniProtKB" id="P05031"/>
    </source>
</evidence>
<evidence type="ECO:0000256" key="2">
    <source>
        <dbReference type="SAM" id="MobiDB-lite"/>
    </source>
</evidence>
<evidence type="ECO:0000305" key="3"/>
<comment type="function">
    <text evidence="1">Catalyzes the decarboxylation of L-3,4-dihydroxyphenylalanine (L-DOPA) to dopamine and L-5-hydroxytryptophan (5-HTP) to serotonin. Catalyzes the formation of serotonin more efficiently than dopamine. Displays no activity to tyrosine. Variation in the synthesis of bioamines may be a factor contributing to natural variation in life span.</text>
</comment>
<comment type="catalytic activity">
    <reaction evidence="1">
        <text>L-dopa + H(+) = dopamine + CO2</text>
        <dbReference type="Rhea" id="RHEA:12272"/>
        <dbReference type="ChEBI" id="CHEBI:15378"/>
        <dbReference type="ChEBI" id="CHEBI:16526"/>
        <dbReference type="ChEBI" id="CHEBI:57504"/>
        <dbReference type="ChEBI" id="CHEBI:59905"/>
        <dbReference type="EC" id="4.1.1.28"/>
    </reaction>
    <physiologicalReaction direction="left-to-right" evidence="1">
        <dbReference type="Rhea" id="RHEA:12273"/>
    </physiologicalReaction>
</comment>
<comment type="catalytic activity">
    <reaction evidence="1">
        <text>5-hydroxy-L-tryptophan + H(+) = serotonin + CO2</text>
        <dbReference type="Rhea" id="RHEA:18533"/>
        <dbReference type="ChEBI" id="CHEBI:15378"/>
        <dbReference type="ChEBI" id="CHEBI:16526"/>
        <dbReference type="ChEBI" id="CHEBI:58266"/>
        <dbReference type="ChEBI" id="CHEBI:350546"/>
        <dbReference type="EC" id="4.1.1.28"/>
    </reaction>
</comment>
<comment type="cofactor">
    <cofactor evidence="1">
        <name>pyridoxal 5'-phosphate</name>
        <dbReference type="ChEBI" id="CHEBI:597326"/>
    </cofactor>
</comment>
<comment type="subunit">
    <text evidence="1">Homodimer.</text>
</comment>
<comment type="alternative products">
    <event type="alternative splicing"/>
    <isoform>
        <id>O96567-1</id>
        <name>1</name>
        <name>Brain</name>
        <name>56.7 kDa</name>
        <sequence type="displayed"/>
    </isoform>
    <isoform>
        <id>O96567-2</id>
        <name>2</name>
        <name>Hypoderm</name>
        <name>56.2 kDa</name>
        <sequence type="described" ref="VSP_009723"/>
    </isoform>
</comment>
<comment type="similarity">
    <text evidence="3">Belongs to the group II decarboxylase family.</text>
</comment>
<feature type="chain" id="PRO_0000146947" description="Aromatic-L-amino-acid decarboxylase">
    <location>
        <begin position="1"/>
        <end position="510"/>
    </location>
</feature>
<feature type="region of interest" description="Disordered" evidence="2">
    <location>
        <begin position="1"/>
        <end position="29"/>
    </location>
</feature>
<feature type="region of interest" description="Disordered" evidence="1">
    <location>
        <begin position="358"/>
        <end position="384"/>
    </location>
</feature>
<feature type="compositionally biased region" description="Polar residues" evidence="2">
    <location>
        <begin position="1"/>
        <end position="17"/>
    </location>
</feature>
<feature type="binding site" evidence="1">
    <location>
        <position position="117"/>
    </location>
    <ligand>
        <name>substrate</name>
    </ligand>
</feature>
<feature type="binding site" evidence="1">
    <location>
        <position position="183"/>
    </location>
    <ligand>
        <name>pyridoxal 5'-phosphate</name>
        <dbReference type="ChEBI" id="CHEBI:597326"/>
    </ligand>
</feature>
<feature type="binding site" evidence="1">
    <location>
        <position position="184"/>
    </location>
    <ligand>
        <name>pyridoxal 5'-phosphate</name>
        <dbReference type="ChEBI" id="CHEBI:597326"/>
    </ligand>
</feature>
<feature type="binding site" evidence="1">
    <location>
        <position position="227"/>
    </location>
    <ligand>
        <name>pyridoxal 5'-phosphate</name>
        <dbReference type="ChEBI" id="CHEBI:597326"/>
    </ligand>
</feature>
<feature type="binding site" evidence="1">
    <location>
        <position position="227"/>
    </location>
    <ligand>
        <name>substrate</name>
    </ligand>
</feature>
<feature type="binding site" evidence="1">
    <location>
        <position position="305"/>
    </location>
    <ligand>
        <name>pyridoxal 5'-phosphate</name>
        <dbReference type="ChEBI" id="CHEBI:597326"/>
    </ligand>
</feature>
<feature type="binding site" evidence="1">
    <location>
        <position position="334"/>
    </location>
    <ligand>
        <name>pyridoxal 5'-phosphate</name>
        <dbReference type="ChEBI" id="CHEBI:597326"/>
    </ligand>
</feature>
<feature type="modified residue" description="N6-(pyridoxal phosphate)lysine" evidence="1">
    <location>
        <position position="337"/>
    </location>
</feature>
<feature type="splice variant" id="VSP_009723" description="In isoform 2." evidence="3">
    <original>MSHIPISNTIPPKQTDGNGKANISPDKLDPKVS</original>
    <variation>MSIGLGTHIGVDNYARMLTKYFCIHIK</variation>
    <location>
        <begin position="1"/>
        <end position="33"/>
    </location>
</feature>
<feature type="sequence conflict" description="In Ref. 2; AAC67580." evidence="3" ref="2">
    <original>V</original>
    <variation>A</variation>
    <location>
        <position position="169"/>
    </location>
</feature>
<name>DDC_DROSI</name>
<proteinExistence type="inferred from homology"/>